<proteinExistence type="inferred from homology"/>
<protein>
    <recommendedName>
        <fullName evidence="1">Ribonuclease 3</fullName>
        <ecNumber evidence="1">3.1.26.3</ecNumber>
    </recommendedName>
    <alternativeName>
        <fullName evidence="1">Ribonuclease III</fullName>
        <shortName evidence="1">RNase III</shortName>
    </alternativeName>
</protein>
<feature type="chain" id="PRO_1000118928" description="Ribonuclease 3">
    <location>
        <begin position="1"/>
        <end position="229"/>
    </location>
</feature>
<feature type="domain" description="RNase III" evidence="1">
    <location>
        <begin position="7"/>
        <end position="132"/>
    </location>
</feature>
<feature type="domain" description="DRBM" evidence="1">
    <location>
        <begin position="157"/>
        <end position="226"/>
    </location>
</feature>
<feature type="active site" evidence="1">
    <location>
        <position position="49"/>
    </location>
</feature>
<feature type="active site" evidence="1">
    <location>
        <position position="121"/>
    </location>
</feature>
<feature type="binding site" evidence="1">
    <location>
        <position position="45"/>
    </location>
    <ligand>
        <name>Mg(2+)</name>
        <dbReference type="ChEBI" id="CHEBI:18420"/>
    </ligand>
</feature>
<feature type="binding site" evidence="1">
    <location>
        <position position="118"/>
    </location>
    <ligand>
        <name>Mg(2+)</name>
        <dbReference type="ChEBI" id="CHEBI:18420"/>
    </ligand>
</feature>
<feature type="binding site" evidence="1">
    <location>
        <position position="121"/>
    </location>
    <ligand>
        <name>Mg(2+)</name>
        <dbReference type="ChEBI" id="CHEBI:18420"/>
    </ligand>
</feature>
<organism>
    <name type="scientific">Cereibacter sphaeroides (strain KD131 / KCTC 12085)</name>
    <name type="common">Rhodobacter sphaeroides</name>
    <dbReference type="NCBI Taxonomy" id="557760"/>
    <lineage>
        <taxon>Bacteria</taxon>
        <taxon>Pseudomonadati</taxon>
        <taxon>Pseudomonadota</taxon>
        <taxon>Alphaproteobacteria</taxon>
        <taxon>Rhodobacterales</taxon>
        <taxon>Paracoccaceae</taxon>
        <taxon>Cereibacter</taxon>
    </lineage>
</organism>
<evidence type="ECO:0000255" key="1">
    <source>
        <dbReference type="HAMAP-Rule" id="MF_00104"/>
    </source>
</evidence>
<keyword id="KW-0963">Cytoplasm</keyword>
<keyword id="KW-0255">Endonuclease</keyword>
<keyword id="KW-0378">Hydrolase</keyword>
<keyword id="KW-0460">Magnesium</keyword>
<keyword id="KW-0479">Metal-binding</keyword>
<keyword id="KW-0507">mRNA processing</keyword>
<keyword id="KW-0540">Nuclease</keyword>
<keyword id="KW-0694">RNA-binding</keyword>
<keyword id="KW-0698">rRNA processing</keyword>
<keyword id="KW-0699">rRNA-binding</keyword>
<keyword id="KW-0819">tRNA processing</keyword>
<gene>
    <name evidence="1" type="primary">rnc</name>
    <name type="ordered locus">RSKD131_3075</name>
</gene>
<name>RNC_CERSK</name>
<comment type="function">
    <text evidence="1">Digests double-stranded RNA. Involved in the processing of primary rRNA transcript to yield the immediate precursors to the large and small rRNAs (23S and 16S). Processes some mRNAs, and tRNAs when they are encoded in the rRNA operon. Processes pre-crRNA and tracrRNA of type II CRISPR loci if present in the organism.</text>
</comment>
<comment type="catalytic activity">
    <reaction evidence="1">
        <text>Endonucleolytic cleavage to 5'-phosphomonoester.</text>
        <dbReference type="EC" id="3.1.26.3"/>
    </reaction>
</comment>
<comment type="cofactor">
    <cofactor evidence="1">
        <name>Mg(2+)</name>
        <dbReference type="ChEBI" id="CHEBI:18420"/>
    </cofactor>
</comment>
<comment type="subunit">
    <text evidence="1">Homodimer.</text>
</comment>
<comment type="subcellular location">
    <subcellularLocation>
        <location evidence="1">Cytoplasm</location>
    </subcellularLocation>
</comment>
<comment type="similarity">
    <text evidence="1">Belongs to the ribonuclease III family.</text>
</comment>
<dbReference type="EC" id="3.1.26.3" evidence="1"/>
<dbReference type="EMBL" id="CP001150">
    <property type="protein sequence ID" value="ACM02935.1"/>
    <property type="molecule type" value="Genomic_DNA"/>
</dbReference>
<dbReference type="RefSeq" id="WP_002722419.1">
    <property type="nucleotide sequence ID" value="NC_011963.1"/>
</dbReference>
<dbReference type="SMR" id="B9KSA7"/>
<dbReference type="GeneID" id="67448435"/>
<dbReference type="KEGG" id="rsk:RSKD131_3075"/>
<dbReference type="HOGENOM" id="CLU_000907_1_1_5"/>
<dbReference type="GO" id="GO:0005737">
    <property type="term" value="C:cytoplasm"/>
    <property type="evidence" value="ECO:0007669"/>
    <property type="project" value="UniProtKB-SubCell"/>
</dbReference>
<dbReference type="GO" id="GO:0003725">
    <property type="term" value="F:double-stranded RNA binding"/>
    <property type="evidence" value="ECO:0007669"/>
    <property type="project" value="TreeGrafter"/>
</dbReference>
<dbReference type="GO" id="GO:0046872">
    <property type="term" value="F:metal ion binding"/>
    <property type="evidence" value="ECO:0007669"/>
    <property type="project" value="UniProtKB-KW"/>
</dbReference>
<dbReference type="GO" id="GO:0004525">
    <property type="term" value="F:ribonuclease III activity"/>
    <property type="evidence" value="ECO:0007669"/>
    <property type="project" value="UniProtKB-UniRule"/>
</dbReference>
<dbReference type="GO" id="GO:0019843">
    <property type="term" value="F:rRNA binding"/>
    <property type="evidence" value="ECO:0007669"/>
    <property type="project" value="UniProtKB-KW"/>
</dbReference>
<dbReference type="GO" id="GO:0006397">
    <property type="term" value="P:mRNA processing"/>
    <property type="evidence" value="ECO:0007669"/>
    <property type="project" value="UniProtKB-UniRule"/>
</dbReference>
<dbReference type="GO" id="GO:0010468">
    <property type="term" value="P:regulation of gene expression"/>
    <property type="evidence" value="ECO:0007669"/>
    <property type="project" value="TreeGrafter"/>
</dbReference>
<dbReference type="GO" id="GO:0006364">
    <property type="term" value="P:rRNA processing"/>
    <property type="evidence" value="ECO:0007669"/>
    <property type="project" value="UniProtKB-UniRule"/>
</dbReference>
<dbReference type="GO" id="GO:0008033">
    <property type="term" value="P:tRNA processing"/>
    <property type="evidence" value="ECO:0007669"/>
    <property type="project" value="UniProtKB-KW"/>
</dbReference>
<dbReference type="CDD" id="cd10845">
    <property type="entry name" value="DSRM_RNAse_III_family"/>
    <property type="match status" value="1"/>
</dbReference>
<dbReference type="CDD" id="cd00593">
    <property type="entry name" value="RIBOc"/>
    <property type="match status" value="1"/>
</dbReference>
<dbReference type="FunFam" id="1.10.1520.10:FF:000001">
    <property type="entry name" value="Ribonuclease 3"/>
    <property type="match status" value="1"/>
</dbReference>
<dbReference type="Gene3D" id="3.30.160.20">
    <property type="match status" value="1"/>
</dbReference>
<dbReference type="Gene3D" id="1.10.1520.10">
    <property type="entry name" value="Ribonuclease III domain"/>
    <property type="match status" value="1"/>
</dbReference>
<dbReference type="HAMAP" id="MF_00104">
    <property type="entry name" value="RNase_III"/>
    <property type="match status" value="1"/>
</dbReference>
<dbReference type="InterPro" id="IPR014720">
    <property type="entry name" value="dsRBD_dom"/>
</dbReference>
<dbReference type="InterPro" id="IPR011907">
    <property type="entry name" value="RNase_III"/>
</dbReference>
<dbReference type="InterPro" id="IPR000999">
    <property type="entry name" value="RNase_III_dom"/>
</dbReference>
<dbReference type="InterPro" id="IPR036389">
    <property type="entry name" value="RNase_III_sf"/>
</dbReference>
<dbReference type="NCBIfam" id="TIGR02191">
    <property type="entry name" value="RNaseIII"/>
    <property type="match status" value="1"/>
</dbReference>
<dbReference type="PANTHER" id="PTHR11207:SF0">
    <property type="entry name" value="RIBONUCLEASE 3"/>
    <property type="match status" value="1"/>
</dbReference>
<dbReference type="PANTHER" id="PTHR11207">
    <property type="entry name" value="RIBONUCLEASE III"/>
    <property type="match status" value="1"/>
</dbReference>
<dbReference type="Pfam" id="PF00035">
    <property type="entry name" value="dsrm"/>
    <property type="match status" value="1"/>
</dbReference>
<dbReference type="Pfam" id="PF14622">
    <property type="entry name" value="Ribonucleas_3_3"/>
    <property type="match status" value="1"/>
</dbReference>
<dbReference type="SMART" id="SM00358">
    <property type="entry name" value="DSRM"/>
    <property type="match status" value="1"/>
</dbReference>
<dbReference type="SMART" id="SM00535">
    <property type="entry name" value="RIBOc"/>
    <property type="match status" value="1"/>
</dbReference>
<dbReference type="SUPFAM" id="SSF54768">
    <property type="entry name" value="dsRNA-binding domain-like"/>
    <property type="match status" value="1"/>
</dbReference>
<dbReference type="SUPFAM" id="SSF69065">
    <property type="entry name" value="RNase III domain-like"/>
    <property type="match status" value="1"/>
</dbReference>
<dbReference type="PROSITE" id="PS50137">
    <property type="entry name" value="DS_RBD"/>
    <property type="match status" value="1"/>
</dbReference>
<dbReference type="PROSITE" id="PS00517">
    <property type="entry name" value="RNASE_3_1"/>
    <property type="match status" value="1"/>
</dbReference>
<dbReference type="PROSITE" id="PS50142">
    <property type="entry name" value="RNASE_3_2"/>
    <property type="match status" value="1"/>
</dbReference>
<sequence length="229" mass="24860">MKLSADLKAFEGRIGHQFREPERLLRAVTHSSLSSVTRSDNQRLEFLGDRVLGLVMAEALLAADRAASEGQLAPRFNALVRKETCAAVAREVALGDVLKLGRSEMMSGGRRKEALLGDALEAVIAAVYLDAGFEAARQLVLRLWGARIAQVERDARDAKTALQEWAQARGLPPPTYEAVDRSGPDHAPIFTVEVRLGNGETDRAAAGTKRVAEQAAARALLARMEARHD</sequence>
<reference key="1">
    <citation type="journal article" date="2009" name="J. Bacteriol.">
        <title>Complete genome sequence of Rhodobacter sphaeroides KD131.</title>
        <authorList>
            <person name="Lim S.-K."/>
            <person name="Kim S.J."/>
            <person name="Cha S.H."/>
            <person name="Oh Y.-K."/>
            <person name="Rhee H.-J."/>
            <person name="Kim M.-S."/>
            <person name="Lee J.K."/>
        </authorList>
    </citation>
    <scope>NUCLEOTIDE SEQUENCE [LARGE SCALE GENOMIC DNA]</scope>
    <source>
        <strain>KD131 / KCTC 12085</strain>
    </source>
</reference>
<accession>B9KSA7</accession>